<keyword id="KW-0687">Ribonucleoprotein</keyword>
<keyword id="KW-0689">Ribosomal protein</keyword>
<feature type="chain" id="PRO_0000178422" description="Large ribosomal subunit protein bL28">
    <location>
        <begin position="1"/>
        <end position="62"/>
    </location>
</feature>
<feature type="region of interest" description="Disordered" evidence="2">
    <location>
        <begin position="1"/>
        <end position="28"/>
    </location>
</feature>
<comment type="similarity">
    <text evidence="1">Belongs to the bacterial ribosomal protein bL28 family.</text>
</comment>
<dbReference type="EMBL" id="AE017194">
    <property type="protein sequence ID" value="AAS42805.1"/>
    <property type="molecule type" value="Genomic_DNA"/>
</dbReference>
<dbReference type="SMR" id="Q732L2"/>
<dbReference type="KEGG" id="bca:BCE_3900"/>
<dbReference type="HOGENOM" id="CLU_064548_7_1_9"/>
<dbReference type="Proteomes" id="UP000002527">
    <property type="component" value="Chromosome"/>
</dbReference>
<dbReference type="GO" id="GO:1990904">
    <property type="term" value="C:ribonucleoprotein complex"/>
    <property type="evidence" value="ECO:0007669"/>
    <property type="project" value="UniProtKB-KW"/>
</dbReference>
<dbReference type="GO" id="GO:0005840">
    <property type="term" value="C:ribosome"/>
    <property type="evidence" value="ECO:0007669"/>
    <property type="project" value="UniProtKB-KW"/>
</dbReference>
<dbReference type="GO" id="GO:0003735">
    <property type="term" value="F:structural constituent of ribosome"/>
    <property type="evidence" value="ECO:0007669"/>
    <property type="project" value="InterPro"/>
</dbReference>
<dbReference type="GO" id="GO:0006412">
    <property type="term" value="P:translation"/>
    <property type="evidence" value="ECO:0007669"/>
    <property type="project" value="UniProtKB-UniRule"/>
</dbReference>
<dbReference type="Gene3D" id="2.30.170.40">
    <property type="entry name" value="Ribosomal protein L28/L24"/>
    <property type="match status" value="1"/>
</dbReference>
<dbReference type="HAMAP" id="MF_00373">
    <property type="entry name" value="Ribosomal_bL28"/>
    <property type="match status" value="1"/>
</dbReference>
<dbReference type="InterPro" id="IPR050096">
    <property type="entry name" value="Bacterial_rp_bL28"/>
</dbReference>
<dbReference type="InterPro" id="IPR026569">
    <property type="entry name" value="Ribosomal_bL28"/>
</dbReference>
<dbReference type="InterPro" id="IPR034704">
    <property type="entry name" value="Ribosomal_bL28/bL31-like_sf"/>
</dbReference>
<dbReference type="InterPro" id="IPR001383">
    <property type="entry name" value="Ribosomal_bL28_bact-type"/>
</dbReference>
<dbReference type="InterPro" id="IPR037147">
    <property type="entry name" value="Ribosomal_bL28_sf"/>
</dbReference>
<dbReference type="NCBIfam" id="TIGR00009">
    <property type="entry name" value="L28"/>
    <property type="match status" value="1"/>
</dbReference>
<dbReference type="PANTHER" id="PTHR39080">
    <property type="entry name" value="50S RIBOSOMAL PROTEIN L28"/>
    <property type="match status" value="1"/>
</dbReference>
<dbReference type="PANTHER" id="PTHR39080:SF1">
    <property type="entry name" value="LARGE RIBOSOMAL SUBUNIT PROTEIN BL28A"/>
    <property type="match status" value="1"/>
</dbReference>
<dbReference type="Pfam" id="PF00830">
    <property type="entry name" value="Ribosomal_L28"/>
    <property type="match status" value="1"/>
</dbReference>
<dbReference type="SUPFAM" id="SSF143800">
    <property type="entry name" value="L28p-like"/>
    <property type="match status" value="1"/>
</dbReference>
<evidence type="ECO:0000255" key="1">
    <source>
        <dbReference type="HAMAP-Rule" id="MF_00373"/>
    </source>
</evidence>
<evidence type="ECO:0000256" key="2">
    <source>
        <dbReference type="SAM" id="MobiDB-lite"/>
    </source>
</evidence>
<evidence type="ECO:0000305" key="3"/>
<accession>Q732L2</accession>
<protein>
    <recommendedName>
        <fullName evidence="1">Large ribosomal subunit protein bL28</fullName>
    </recommendedName>
    <alternativeName>
        <fullName evidence="3">50S ribosomal protein L28</fullName>
    </alternativeName>
</protein>
<sequence>MARVCAITGRKARSGNSRSHAMNATKRKWGANLQKVRVRIDGKVQRVYVSARALKSGKIERV</sequence>
<name>RL28_BACC1</name>
<reference key="1">
    <citation type="journal article" date="2004" name="Nucleic Acids Res.">
        <title>The genome sequence of Bacillus cereus ATCC 10987 reveals metabolic adaptations and a large plasmid related to Bacillus anthracis pXO1.</title>
        <authorList>
            <person name="Rasko D.A."/>
            <person name="Ravel J."/>
            <person name="Oekstad O.A."/>
            <person name="Helgason E."/>
            <person name="Cer R.Z."/>
            <person name="Jiang L."/>
            <person name="Shores K.A."/>
            <person name="Fouts D.E."/>
            <person name="Tourasse N.J."/>
            <person name="Angiuoli S.V."/>
            <person name="Kolonay J.F."/>
            <person name="Nelson W.C."/>
            <person name="Kolstoe A.-B."/>
            <person name="Fraser C.M."/>
            <person name="Read T.D."/>
        </authorList>
    </citation>
    <scope>NUCLEOTIDE SEQUENCE [LARGE SCALE GENOMIC DNA]</scope>
    <source>
        <strain>ATCC 10987 / NRS 248</strain>
    </source>
</reference>
<proteinExistence type="inferred from homology"/>
<gene>
    <name evidence="1" type="primary">rpmB</name>
    <name type="ordered locus">BCE_3900</name>
</gene>
<organism>
    <name type="scientific">Bacillus cereus (strain ATCC 10987 / NRS 248)</name>
    <dbReference type="NCBI Taxonomy" id="222523"/>
    <lineage>
        <taxon>Bacteria</taxon>
        <taxon>Bacillati</taxon>
        <taxon>Bacillota</taxon>
        <taxon>Bacilli</taxon>
        <taxon>Bacillales</taxon>
        <taxon>Bacillaceae</taxon>
        <taxon>Bacillus</taxon>
        <taxon>Bacillus cereus group</taxon>
    </lineage>
</organism>